<protein>
    <recommendedName>
        <fullName>Regulatory protein SoxS</fullName>
    </recommendedName>
</protein>
<name>SOXS_ECOLI</name>
<reference key="1">
    <citation type="journal article" date="1991" name="J. Bacteriol.">
        <title>Two divergently transcribed genes, soxR and soxS, control a superoxide response regulon of Escherichia coli.</title>
        <authorList>
            <person name="Wu J."/>
            <person name="Weiss B."/>
        </authorList>
    </citation>
    <scope>NUCLEOTIDE SEQUENCE [GENOMIC DNA]</scope>
</reference>
<reference key="2">
    <citation type="journal article" date="1991" name="Nucleic Acids Res.">
        <title>Molecular characterization of the soxRS genes of Escherichia coli: two genes control a superoxide stress regulon.</title>
        <authorList>
            <person name="Amabile-Cuevas C.F."/>
            <person name="Demple B."/>
        </authorList>
    </citation>
    <scope>NUCLEOTIDE SEQUENCE [GENOMIC DNA]</scope>
    <source>
        <strain>K12</strain>
    </source>
</reference>
<reference key="3">
    <citation type="journal article" date="1993" name="Nucleic Acids Res.">
        <title>Analysis of the Escherichia coli genome. IV. DNA sequence of the region from 89.2 to 92.8 minutes.</title>
        <authorList>
            <person name="Blattner F.R."/>
            <person name="Burland V.D."/>
            <person name="Plunkett G. III"/>
            <person name="Sofia H.J."/>
            <person name="Daniels D.L."/>
        </authorList>
    </citation>
    <scope>NUCLEOTIDE SEQUENCE [LARGE SCALE GENOMIC DNA]</scope>
    <source>
        <strain>K12 / MG1655 / ATCC 47076</strain>
    </source>
</reference>
<reference key="4">
    <citation type="journal article" date="1997" name="Science">
        <title>The complete genome sequence of Escherichia coli K-12.</title>
        <authorList>
            <person name="Blattner F.R."/>
            <person name="Plunkett G. III"/>
            <person name="Bloch C.A."/>
            <person name="Perna N.T."/>
            <person name="Burland V."/>
            <person name="Riley M."/>
            <person name="Collado-Vides J."/>
            <person name="Glasner J.D."/>
            <person name="Rode C.K."/>
            <person name="Mayhew G.F."/>
            <person name="Gregor J."/>
            <person name="Davis N.W."/>
            <person name="Kirkpatrick H.A."/>
            <person name="Goeden M.A."/>
            <person name="Rose D.J."/>
            <person name="Mau B."/>
            <person name="Shao Y."/>
        </authorList>
    </citation>
    <scope>NUCLEOTIDE SEQUENCE [LARGE SCALE GENOMIC DNA]</scope>
    <source>
        <strain>K12 / MG1655 / ATCC 47076</strain>
    </source>
</reference>
<reference key="5">
    <citation type="journal article" date="2006" name="Mol. Syst. Biol.">
        <title>Highly accurate genome sequences of Escherichia coli K-12 strains MG1655 and W3110.</title>
        <authorList>
            <person name="Hayashi K."/>
            <person name="Morooka N."/>
            <person name="Yamamoto Y."/>
            <person name="Fujita K."/>
            <person name="Isono K."/>
            <person name="Choi S."/>
            <person name="Ohtsubo E."/>
            <person name="Baba T."/>
            <person name="Wanner B.L."/>
            <person name="Mori H."/>
            <person name="Horiuchi T."/>
        </authorList>
    </citation>
    <scope>NUCLEOTIDE SEQUENCE [LARGE SCALE GENOMIC DNA]</scope>
    <source>
        <strain>K12 / W3110 / ATCC 27325 / DSM 5911</strain>
    </source>
</reference>
<reference key="6">
    <citation type="journal article" date="1994" name="J. Biol. Chem.">
        <title>SoxS, an activator of superoxide stress genes in Escherichia coli. Purification and interaction with DNA.</title>
        <authorList>
            <person name="Li Z."/>
            <person name="Demple B."/>
        </authorList>
    </citation>
    <scope>PROTEIN SEQUENCE OF 2-12</scope>
    <scope>CHARACTERIZATION</scope>
    <source>
        <strain>K12 / XA90</strain>
    </source>
</reference>
<feature type="initiator methionine" description="Removed" evidence="2">
    <location>
        <position position="1"/>
    </location>
</feature>
<feature type="chain" id="PRO_0000194583" description="Regulatory protein SoxS">
    <location>
        <begin position="2"/>
        <end position="107"/>
    </location>
</feature>
<feature type="domain" description="HTH araC/xylS-type" evidence="1">
    <location>
        <begin position="8"/>
        <end position="106"/>
    </location>
</feature>
<feature type="DNA-binding region" description="H-T-H motif" evidence="1">
    <location>
        <begin position="25"/>
        <end position="46"/>
    </location>
</feature>
<feature type="DNA-binding region" description="H-T-H motif" evidence="1">
    <location>
        <begin position="73"/>
        <end position="96"/>
    </location>
</feature>
<feature type="helix" evidence="3">
    <location>
        <begin position="3"/>
        <end position="10"/>
    </location>
</feature>
<feature type="turn" evidence="3">
    <location>
        <begin position="11"/>
        <end position="13"/>
    </location>
</feature>
<feature type="strand" evidence="3">
    <location>
        <begin position="14"/>
        <end position="16"/>
    </location>
</feature>
<feature type="strand" evidence="3">
    <location>
        <begin position="18"/>
        <end position="20"/>
    </location>
</feature>
<feature type="helix" evidence="3">
    <location>
        <begin position="24"/>
        <end position="27"/>
    </location>
</feature>
<feature type="helix" evidence="3">
    <location>
        <begin position="29"/>
        <end position="31"/>
    </location>
</feature>
<feature type="helix" evidence="3">
    <location>
        <begin position="37"/>
        <end position="46"/>
    </location>
</feature>
<feature type="helix" evidence="3">
    <location>
        <begin position="53"/>
        <end position="64"/>
    </location>
</feature>
<feature type="helix" evidence="3">
    <location>
        <begin position="73"/>
        <end position="76"/>
    </location>
</feature>
<feature type="turn" evidence="3">
    <location>
        <begin position="77"/>
        <end position="81"/>
    </location>
</feature>
<feature type="helix" evidence="3">
    <location>
        <begin position="85"/>
        <end position="88"/>
    </location>
</feature>
<feature type="turn" evidence="3">
    <location>
        <begin position="89"/>
        <end position="91"/>
    </location>
</feature>
<feature type="helix" evidence="3">
    <location>
        <begin position="92"/>
        <end position="95"/>
    </location>
</feature>
<feature type="strand" evidence="3">
    <location>
        <begin position="96"/>
        <end position="98"/>
    </location>
</feature>
<feature type="turn" evidence="3">
    <location>
        <begin position="100"/>
        <end position="105"/>
    </location>
</feature>
<organism>
    <name type="scientific">Escherichia coli (strain K12)</name>
    <dbReference type="NCBI Taxonomy" id="83333"/>
    <lineage>
        <taxon>Bacteria</taxon>
        <taxon>Pseudomonadati</taxon>
        <taxon>Pseudomonadota</taxon>
        <taxon>Gammaproteobacteria</taxon>
        <taxon>Enterobacterales</taxon>
        <taxon>Enterobacteriaceae</taxon>
        <taxon>Escherichia</taxon>
    </lineage>
</organism>
<evidence type="ECO:0000255" key="1">
    <source>
        <dbReference type="PROSITE-ProRule" id="PRU00593"/>
    </source>
</evidence>
<evidence type="ECO:0000269" key="2">
    <source>
    </source>
</evidence>
<evidence type="ECO:0007829" key="3">
    <source>
        <dbReference type="PDB" id="7W5X"/>
    </source>
</evidence>
<accession>P0A9E2</accession>
<accession>P22539</accession>
<accession>Q2M6P2</accession>
<sequence length="107" mass="12911">MSHQKIIQDLIAWIDEHIDQPLNIDVVAKKSGYSKWYLQRMFRTVTHQTLGDYIRQRRLLLAAVELRTTERPIFDIAMDLGYVSQQTFSRVFRRQFDRTPSDYRHRL</sequence>
<comment type="function">
    <text>Transcriptional activator of the superoxide response regulon of E.coli that includes at least 10 genes such as sodA, nfo, zwf and micF. Binds the DNA sequence 5'-GCACN(7)CAA-3'. It also facilitates the subsequent binding of RNA polymerase to the micF and the nfo promoters.</text>
</comment>
<comment type="subcellular location">
    <subcellularLocation>
        <location>Cytoplasm</location>
    </subcellularLocation>
</comment>
<comment type="induction">
    <text>By paraquat.</text>
</comment>
<proteinExistence type="evidence at protein level"/>
<dbReference type="EMBL" id="M60111">
    <property type="protein sequence ID" value="AAA24640.1"/>
    <property type="molecule type" value="Genomic_DNA"/>
</dbReference>
<dbReference type="EMBL" id="X59593">
    <property type="protein sequence ID" value="CAA42161.1"/>
    <property type="molecule type" value="Genomic_DNA"/>
</dbReference>
<dbReference type="EMBL" id="U00006">
    <property type="protein sequence ID" value="AAC43156.1"/>
    <property type="molecule type" value="Genomic_DNA"/>
</dbReference>
<dbReference type="EMBL" id="U00096">
    <property type="protein sequence ID" value="AAC77032.1"/>
    <property type="molecule type" value="Genomic_DNA"/>
</dbReference>
<dbReference type="EMBL" id="AP009048">
    <property type="protein sequence ID" value="BAE78064.1"/>
    <property type="molecule type" value="Genomic_DNA"/>
</dbReference>
<dbReference type="PIR" id="JS0578">
    <property type="entry name" value="JS0578"/>
</dbReference>
<dbReference type="RefSeq" id="NP_418486.1">
    <property type="nucleotide sequence ID" value="NC_000913.3"/>
</dbReference>
<dbReference type="RefSeq" id="WP_000019358.1">
    <property type="nucleotide sequence ID" value="NZ_STEB01000014.1"/>
</dbReference>
<dbReference type="PDB" id="7W5W">
    <property type="method" value="EM"/>
    <property type="resolution" value="4.55 A"/>
    <property type="chains" value="J=1-107"/>
</dbReference>
<dbReference type="PDB" id="7W5X">
    <property type="method" value="EM"/>
    <property type="resolution" value="3.40 A"/>
    <property type="chains" value="K=1-107"/>
</dbReference>
<dbReference type="PDB" id="7W5Y">
    <property type="method" value="EM"/>
    <property type="resolution" value="4.20 A"/>
    <property type="chains" value="K=1-107"/>
</dbReference>
<dbReference type="PDBsum" id="7W5W"/>
<dbReference type="PDBsum" id="7W5X"/>
<dbReference type="PDBsum" id="7W5Y"/>
<dbReference type="EMDB" id="EMD-32322"/>
<dbReference type="EMDB" id="EMD-32323"/>
<dbReference type="EMDB" id="EMD-32324"/>
<dbReference type="SMR" id="P0A9E2"/>
<dbReference type="BioGRID" id="4262018">
    <property type="interactions" value="212"/>
</dbReference>
<dbReference type="BioGRID" id="852861">
    <property type="interactions" value="1"/>
</dbReference>
<dbReference type="DIP" id="DIP-10904N"/>
<dbReference type="FunCoup" id="P0A9E2">
    <property type="interactions" value="160"/>
</dbReference>
<dbReference type="IntAct" id="P0A9E2">
    <property type="interactions" value="10"/>
</dbReference>
<dbReference type="STRING" id="511145.b4062"/>
<dbReference type="PaxDb" id="511145-b4062"/>
<dbReference type="EnsemblBacteria" id="AAC77032">
    <property type="protein sequence ID" value="AAC77032"/>
    <property type="gene ID" value="b4062"/>
</dbReference>
<dbReference type="GeneID" id="93777769"/>
<dbReference type="GeneID" id="948567"/>
<dbReference type="KEGG" id="ecj:JW4023"/>
<dbReference type="KEGG" id="eco:b4062"/>
<dbReference type="KEGG" id="ecoc:C3026_21950"/>
<dbReference type="PATRIC" id="fig|511145.12.peg.4183"/>
<dbReference type="EchoBASE" id="EB0951"/>
<dbReference type="eggNOG" id="COG2207">
    <property type="taxonomic scope" value="Bacteria"/>
</dbReference>
<dbReference type="HOGENOM" id="CLU_000445_81_14_6"/>
<dbReference type="InParanoid" id="P0A9E2"/>
<dbReference type="OMA" id="QTQRPVF"/>
<dbReference type="OrthoDB" id="282744at2"/>
<dbReference type="PhylomeDB" id="P0A9E2"/>
<dbReference type="BioCyc" id="EcoCyc:PD00406"/>
<dbReference type="PRO" id="PR:P0A9E2"/>
<dbReference type="Proteomes" id="UP000000625">
    <property type="component" value="Chromosome"/>
</dbReference>
<dbReference type="GO" id="GO:0005829">
    <property type="term" value="C:cytosol"/>
    <property type="evidence" value="ECO:0000318"/>
    <property type="project" value="GO_Central"/>
</dbReference>
<dbReference type="GO" id="GO:0001108">
    <property type="term" value="F:bacterial-type RNA polymerase holo enzyme binding"/>
    <property type="evidence" value="ECO:0000314"/>
    <property type="project" value="EcoCyc"/>
</dbReference>
<dbReference type="GO" id="GO:0000987">
    <property type="term" value="F:cis-regulatory region sequence-specific DNA binding"/>
    <property type="evidence" value="ECO:0000314"/>
    <property type="project" value="EcoCyc"/>
</dbReference>
<dbReference type="GO" id="GO:0003700">
    <property type="term" value="F:DNA-binding transcription factor activity"/>
    <property type="evidence" value="ECO:0007669"/>
    <property type="project" value="InterPro"/>
</dbReference>
<dbReference type="GO" id="GO:0043565">
    <property type="term" value="F:sequence-specific DNA binding"/>
    <property type="evidence" value="ECO:0000318"/>
    <property type="project" value="GO_Central"/>
</dbReference>
<dbReference type="GO" id="GO:0006355">
    <property type="term" value="P:regulation of DNA-templated transcription"/>
    <property type="evidence" value="ECO:0000315"/>
    <property type="project" value="EcoCyc"/>
</dbReference>
<dbReference type="FunFam" id="1.10.10.60:FF:000030">
    <property type="entry name" value="DNA-binding transcriptional regulator SoxS"/>
    <property type="match status" value="1"/>
</dbReference>
<dbReference type="Gene3D" id="1.10.10.60">
    <property type="entry name" value="Homeodomain-like"/>
    <property type="match status" value="2"/>
</dbReference>
<dbReference type="InterPro" id="IPR009057">
    <property type="entry name" value="Homeodomain-like_sf"/>
</dbReference>
<dbReference type="InterPro" id="IPR018060">
    <property type="entry name" value="HTH_AraC"/>
</dbReference>
<dbReference type="InterPro" id="IPR018062">
    <property type="entry name" value="HTH_AraC-typ_CS"/>
</dbReference>
<dbReference type="InterPro" id="IPR050959">
    <property type="entry name" value="MarA-like"/>
</dbReference>
<dbReference type="InterPro" id="IPR020449">
    <property type="entry name" value="Tscrpt_reg_AraC-type_HTH"/>
</dbReference>
<dbReference type="NCBIfam" id="NF007584">
    <property type="entry name" value="PRK10219.1"/>
    <property type="match status" value="1"/>
</dbReference>
<dbReference type="PANTHER" id="PTHR47504:SF2">
    <property type="entry name" value="REGULATORY PROTEIN SOXS"/>
    <property type="match status" value="1"/>
</dbReference>
<dbReference type="PANTHER" id="PTHR47504">
    <property type="entry name" value="RIGHT ORIGIN-BINDING PROTEIN"/>
    <property type="match status" value="1"/>
</dbReference>
<dbReference type="Pfam" id="PF12833">
    <property type="entry name" value="HTH_18"/>
    <property type="match status" value="1"/>
</dbReference>
<dbReference type="PRINTS" id="PR00032">
    <property type="entry name" value="HTHARAC"/>
</dbReference>
<dbReference type="SMART" id="SM00342">
    <property type="entry name" value="HTH_ARAC"/>
    <property type="match status" value="1"/>
</dbReference>
<dbReference type="SUPFAM" id="SSF46689">
    <property type="entry name" value="Homeodomain-like"/>
    <property type="match status" value="2"/>
</dbReference>
<dbReference type="PROSITE" id="PS00041">
    <property type="entry name" value="HTH_ARAC_FAMILY_1"/>
    <property type="match status" value="1"/>
</dbReference>
<dbReference type="PROSITE" id="PS01124">
    <property type="entry name" value="HTH_ARAC_FAMILY_2"/>
    <property type="match status" value="1"/>
</dbReference>
<gene>
    <name type="primary">soxS</name>
    <name type="ordered locus">b4062</name>
    <name type="ordered locus">JW4023</name>
</gene>
<keyword id="KW-0002">3D-structure</keyword>
<keyword id="KW-0010">Activator</keyword>
<keyword id="KW-0963">Cytoplasm</keyword>
<keyword id="KW-0903">Direct protein sequencing</keyword>
<keyword id="KW-0238">DNA-binding</keyword>
<keyword id="KW-1185">Reference proteome</keyword>
<keyword id="KW-0804">Transcription</keyword>
<keyword id="KW-0805">Transcription regulation</keyword>